<comment type="function">
    <text evidence="1">RNA-dependent RNA polymerase, which is responsible for the replication and transcription of the viral RNA genome using antigenomic RNA as an intermediate. During transcription, synthesizes subgenomic RNAs and assures their capping by a cap-snatching mechanism, which involves the endonuclease activity cleaving the host capped pre-mRNAs. These short capped RNAs are then used as primers for viral transcription. The 3'-end of subgenomic mRNAs molecules are heterogeneous and not polyadenylated. The replicase function is to direct synthesis of antigenomic and genomic RNA which are encapsidated and non capped. As a consequence of the use of the same enzyme for both transcription and replication, these mechanisms need to be well coordinated. These processes may be regulated by proteins N and Z in a dose-dependent manner. Z protein inhibits the viral polymerase L und thus the viral transcription and RNA synthesis.</text>
</comment>
<comment type="catalytic activity">
    <reaction evidence="1">
        <text>RNA(n) + a ribonucleoside 5'-triphosphate = RNA(n+1) + diphosphate</text>
        <dbReference type="Rhea" id="RHEA:21248"/>
        <dbReference type="Rhea" id="RHEA-COMP:14527"/>
        <dbReference type="Rhea" id="RHEA-COMP:17342"/>
        <dbReference type="ChEBI" id="CHEBI:33019"/>
        <dbReference type="ChEBI" id="CHEBI:61557"/>
        <dbReference type="ChEBI" id="CHEBI:140395"/>
        <dbReference type="EC" id="2.7.7.48"/>
    </reaction>
</comment>
<comment type="cofactor">
    <cofactor evidence="1">
        <name>Mn(2+)</name>
        <dbReference type="ChEBI" id="CHEBI:29035"/>
    </cofactor>
    <text evidence="1">For endonuclease activity. Binds 2 Mn(2+) ions in the active site. The divalent metal ions are crucial for catalytic activity.</text>
</comment>
<comment type="cofactor">
    <cofactor evidence="1">
        <name>Mg(2+)</name>
        <dbReference type="ChEBI" id="CHEBI:18420"/>
    </cofactor>
    <cofactor evidence="1">
        <name>Mn(2+)</name>
        <dbReference type="ChEBI" id="CHEBI:29035"/>
    </cofactor>
    <text evidence="1">For polymerase activity.</text>
</comment>
<comment type="subunit">
    <text evidence="1">Homomultimer; the oligomeric structure is essential for the polymerase activity. Interacts with nucleoprotein N. Interacts with protein Z; this interaction inhibits viral transcription and replication, Z partially blocks the product exit tunnel for the releasing nascent RNA product.</text>
</comment>
<comment type="subcellular location">
    <subcellularLocation>
        <location evidence="1">Virion</location>
    </subcellularLocation>
    <subcellularLocation>
        <location evidence="1">Host cytoplasm</location>
    </subcellularLocation>
</comment>
<comment type="domain">
    <text evidence="1">The N-terminus contains the endonuclease activity (endoN). The central region contains the RdRp activity.</text>
</comment>
<comment type="miscellaneous">
    <text evidence="1">Classified as His(-) endonuclease since it does not have a histidine upstream of the active site that coordinates the first cation. His(-) endonucleases display very low activity in vitro, although they are clearly active in vivo.</text>
</comment>
<comment type="similarity">
    <text evidence="1">Belongs to the Bunyavirales RNA polymerase family.</text>
</comment>
<evidence type="ECO:0000255" key="1">
    <source>
        <dbReference type="HAMAP-Rule" id="MF_04086"/>
    </source>
</evidence>
<reference key="1">
    <citation type="journal article" date="2008" name="PLoS Pathog.">
        <title>Chapare virus, a newly discovered arenavirus isolated from a fatal hemorrhagic fever case in Bolivia.</title>
        <authorList>
            <person name="Delgado S."/>
            <person name="Erickson B.R."/>
            <person name="Agudo R."/>
            <person name="Blair P.J."/>
            <person name="Vallejo E."/>
            <person name="Albarino C.G."/>
            <person name="Vargas J."/>
            <person name="Comer J.A."/>
            <person name="Rollin P.E."/>
            <person name="Ksiazek T.G."/>
            <person name="Olson J.G."/>
            <person name="Nichol S.T."/>
        </authorList>
    </citation>
    <scope>NUCLEOTIDE SEQUENCE [GENOMIC RNA]</scope>
</reference>
<reference key="2">
    <citation type="journal article" date="2017" name="Crit. Rev. Microbiol.">
        <title>Bunyaviridae RdRps: structure, motifs, and RNA synthesis machinery.</title>
        <authorList>
            <person name="Amroun A."/>
            <person name="Priet S."/>
            <person name="de Lamballerie X."/>
            <person name="Querat G."/>
        </authorList>
    </citation>
    <scope>REVIEW</scope>
</reference>
<reference key="3">
    <citation type="journal article" date="2020" name="Trends Microbiol.">
        <title>The Cap-Snatching Mechanism of Bunyaviruses.</title>
        <authorList>
            <person name="Olschewski S."/>
            <person name="Cusack S."/>
            <person name="Rosenthal M."/>
        </authorList>
    </citation>
    <scope>REVIEW</scope>
</reference>
<proteinExistence type="inferred from homology"/>
<protein>
    <recommendedName>
        <fullName evidence="1">RNA-directed RNA polymerase L</fullName>
        <shortName evidence="1">Protein L</shortName>
        <ecNumber evidence="1">2.7.7.48</ecNumber>
    </recommendedName>
    <alternativeName>
        <fullName evidence="1">Large structural protein</fullName>
    </alternativeName>
    <alternativeName>
        <fullName evidence="1">Replicase</fullName>
    </alternativeName>
    <alternativeName>
        <fullName evidence="1">Transcriptase</fullName>
    </alternativeName>
    <domain>
        <recommendedName>
            <fullName evidence="1">cap-snatching endonuclease</fullName>
            <ecNumber evidence="1">3.1.-.-</ecNumber>
        </recommendedName>
    </domain>
</protein>
<organismHost>
    <name type="scientific">Homo sapiens</name>
    <name type="common">Human</name>
    <dbReference type="NCBI Taxonomy" id="9606"/>
</organismHost>
<sequence>MDTFLLELKDLVRKYVPELVELSFQKDALLSQVHPRLVLVEGFKLLSLLVELESCKVNACRHNFEQKFVDVILSDHGVICPTLPKVTPDGFNLMGKTLILLETFVRVNPNDFERKWKADMSKLMSLKDDLARVGITMVPVVDGRGSYNTSYLPEWATERLRWLLIEILKGVKATSEIEIEDQEYQRLIHSLAKANNQSMGFENLEFLKRRLLSYDQLLDTSLLVGIRNDVRESKIIEELIKIKLWYKTEIFNKGLGKFKRTNKSNLLSDLLKIGLHQDSDTINCMFCSCKILELCYTLSNKLSIDHSKEEMKDDEVGGKQPVCISYSSLLSICNKIKGSKIFNTRRNTLLFLDLIMLNFIVDEMIQDDSVVDSLRGAGFIIGQMVVLVNDRALDILAAMKLIRHKLGNSKDWLSVCGKVLKRYDEEMWKEVKTYIKEPDFDMLFQLAKSLVSERPIMRYTVHKDNESRCLHQNSLNISDQSFKAMLKALSHVSLSLINSMKTSFSSRLLINEKDYSRYYGNVRLKECYVQRFPISSRVTGYLFYQKTGERSRCYSLYISENGELSELGSFYCDPKRFFLPVFSEDTIVSMCNEMVCWLDFDEQLVELVKPKLRSLVLLLLCSPSKRNQTFIQGLRYFIMAYANQAHHVDLMSKLEIECKSSSEIQLQRLAVTLFELVLSTGDDKDFGFARRFKFLLNISYLCHFVTKETPDRLTDQIKCFEKFLEPKLNFNSVIVNPSLSGILTEAQEEIMTSSVNRFFQKNLTNISDVKEPGVSKELISFCVSLFNRGKLRVSGDLKVDPFRPSFTSTALDLSSNKSVVVPKLDELGNALSKYDKQMMISSCVTTLTEMFKTKGRYNLDPDSLDFLVLKNLSNLVSVSVSKGQMKEELSLLYDTLSEEQLESFEQIKQDVQLTLSRMKESKCNNVGLGNSRKVNKHLSKSELLETLWSPYQVLRAIKNEVSIHEIKDFDPDIIEHETVKKLCDEVYQSSNKLEFFLEEPLKSVPLEFLLKNLTTIAYEETDYLECFKYLLIQGGFDQKLGSYEHKSRSRLGLSSEALRVQEDARVSTRESNAEAIAKKLDKTFFTSAALRNLCFYSEDSPTEFTSVSTNTGNLKFGLSYKEQVGSNRELYVGDLNTKLMTRLVEDFSEMITSSMRYSCLNSEKEFERAICDMKMAVNNGDISMSLDHSKWGPHMSPALFYSFLANLNLTEPKSRAKLNLGPLLDILKWHLHKVVEVPFNVAQAYCVGKIKRSLGLMECQTSSVTEQFYHNFLQRENEIPSHIMSVLDMGQGILHNLSDLYALITEQFLNYAIYKLYDVDVLSYTSSDDQISIMKLPAYEHIDEDSPDWLEIVCFHEYLSSKLNKFVSPKSVVGNFVAEFKSRFFVMGEETPLLTKFVAAALHNVRCKTPTQLAETVDTICDQCVANGVSVSIVSKISERVNRLVKYSGFGETPFLSVVKQDVKDWSDGSRGYRLQRNIENSLRDSKILEVMRKGARKVFLGIKNGRIFEENLIGLIGRGGDEALRGFLLYAEVDKDEIENALRYRWVNTSTFGDLRLVLRTKIMSSKRVLERESIPSLVKTLQSRMSKNFTKGAKKILAESINKSAFQSSVASGFIGFCKSMGSKCVRDGSGGFIYLKDIYKKITTCECKHCSVWRGVVYCEKSVEKIFQFTRSIMWDYFTLVLTNACELGEWVFSSVKLPTKATILDNPNLFWAIKPRTHKHIEDRLGLNHILHSIKKNYPQLFEEHLAPFMSDLQSNQMINPSKIKFLDICVALDMVNENLGIIGHLLRGRNNTIYIVKQSECAGAHVRQADYVDQDLGLSPQQICYNFKVQFLLSSMINPLIVSTSTLRSFFWFNEVLSIEEDDQIELGELTDFTLSIKTYNLERAMTLDDMTMGYVCSTLLDEVVSLESLDSCQDLAALQFKRQDLSDFFRDLGEDFVKVGLNIQIVHQRRSTKFDISRKVVYTFRILLLINLSEHLREEVKIPVQSLSLYASGAGNNHLFLDGVSMIPTLPLFNGSKSVNLAKVLIEHELATSNDFKLLECVIMDFSNFLDELRDKYSYVLVGPEEQENPIVFQNGAFMADNQKLSYMRVEIFGDTIVKALGALETDREIENLLCNLWPYLKSIKKTIDFNQADFEMIYDLHRTALLKSLCQMDSWIEFTSFSVAYSKHLQDLVVSDNLGNLRLKGITCRPFRRDQCIQEIE</sequence>
<accession>B2C4J3</accession>
<organism>
    <name type="scientific">Chapare mammarenavirus (isolate Human/Bolivia/810419/2003)</name>
    <dbReference type="NCBI Taxonomy" id="3052302"/>
    <lineage>
        <taxon>Viruses</taxon>
        <taxon>Riboviria</taxon>
        <taxon>Orthornavirae</taxon>
        <taxon>Negarnaviricota</taxon>
        <taxon>Polyploviricotina</taxon>
        <taxon>Ellioviricetes</taxon>
        <taxon>Bunyavirales</taxon>
        <taxon>Arenaviridae</taxon>
        <taxon>Mammarenavirus</taxon>
    </lineage>
</organism>
<gene>
    <name evidence="1" type="primary">L</name>
</gene>
<feature type="chain" id="PRO_0000361634" description="RNA-directed RNA polymerase L">
    <location>
        <begin position="1"/>
        <end position="2208"/>
    </location>
</feature>
<feature type="domain" description="RdRp catalytic" evidence="1">
    <location>
        <begin position="1171"/>
        <end position="1367"/>
    </location>
</feature>
<feature type="region of interest" description="Endonuclease" evidence="1">
    <location>
        <begin position="26"/>
        <end position="284"/>
    </location>
</feature>
<feature type="active site" evidence="1">
    <location>
        <position position="115"/>
    </location>
</feature>
<feature type="binding site" evidence="1">
    <location>
        <position position="51"/>
    </location>
    <ligand>
        <name>Mn(2+)</name>
        <dbReference type="ChEBI" id="CHEBI:29035"/>
        <label>1</label>
    </ligand>
</feature>
<feature type="binding site" evidence="1">
    <location>
        <position position="89"/>
    </location>
    <ligand>
        <name>Mn(2+)</name>
        <dbReference type="ChEBI" id="CHEBI:29035"/>
        <label>1</label>
    </ligand>
</feature>
<feature type="binding site" evidence="1">
    <location>
        <position position="89"/>
    </location>
    <ligand>
        <name>Mn(2+)</name>
        <dbReference type="ChEBI" id="CHEBI:29035"/>
        <label>2</label>
    </ligand>
</feature>
<feature type="binding site" evidence="1">
    <location>
        <position position="102"/>
    </location>
    <ligand>
        <name>Mn(2+)</name>
        <dbReference type="ChEBI" id="CHEBI:29035"/>
        <label>1</label>
    </ligand>
</feature>
<feature type="binding site" evidence="1">
    <location>
        <position position="1329"/>
    </location>
    <ligand>
        <name>Mg(2+)</name>
        <dbReference type="ChEBI" id="CHEBI:18420"/>
        <note>catalytic; for RdRp activity</note>
    </ligand>
</feature>
<keyword id="KW-1157">Cap snatching</keyword>
<keyword id="KW-1035">Host cytoplasm</keyword>
<keyword id="KW-0378">Hydrolase</keyword>
<keyword id="KW-0460">Magnesium</keyword>
<keyword id="KW-0464">Manganese</keyword>
<keyword id="KW-0479">Metal-binding</keyword>
<keyword id="KW-0547">Nucleotide-binding</keyword>
<keyword id="KW-0548">Nucleotidyltransferase</keyword>
<keyword id="KW-0696">RNA-directed RNA polymerase</keyword>
<keyword id="KW-0808">Transferase</keyword>
<keyword id="KW-0693">Viral RNA replication</keyword>
<keyword id="KW-0946">Virion</keyword>
<dbReference type="EC" id="2.7.7.48" evidence="1"/>
<dbReference type="EC" id="3.1.-.-" evidence="1"/>
<dbReference type="EMBL" id="EU260464">
    <property type="protein sequence ID" value="ABY87071.1"/>
    <property type="molecule type" value="Genomic_RNA"/>
</dbReference>
<dbReference type="RefSeq" id="YP_001816785.1">
    <property type="nucleotide sequence ID" value="NC_010563.1"/>
</dbReference>
<dbReference type="SMR" id="B2C4J3"/>
<dbReference type="KEGG" id="vg:6216305"/>
<dbReference type="Proteomes" id="UP000008449">
    <property type="component" value="Genome"/>
</dbReference>
<dbReference type="GO" id="GO:0030430">
    <property type="term" value="C:host cell cytoplasm"/>
    <property type="evidence" value="ECO:0007669"/>
    <property type="project" value="UniProtKB-SubCell"/>
</dbReference>
<dbReference type="GO" id="GO:0044423">
    <property type="term" value="C:virion component"/>
    <property type="evidence" value="ECO:0007669"/>
    <property type="project" value="UniProtKB-KW"/>
</dbReference>
<dbReference type="GO" id="GO:0016787">
    <property type="term" value="F:hydrolase activity"/>
    <property type="evidence" value="ECO:0007669"/>
    <property type="project" value="UniProtKB-KW"/>
</dbReference>
<dbReference type="GO" id="GO:0046872">
    <property type="term" value="F:metal ion binding"/>
    <property type="evidence" value="ECO:0007669"/>
    <property type="project" value="UniProtKB-KW"/>
</dbReference>
<dbReference type="GO" id="GO:0000166">
    <property type="term" value="F:nucleotide binding"/>
    <property type="evidence" value="ECO:0007669"/>
    <property type="project" value="UniProtKB-UniRule"/>
</dbReference>
<dbReference type="GO" id="GO:0003968">
    <property type="term" value="F:RNA-directed RNA polymerase activity"/>
    <property type="evidence" value="ECO:0007669"/>
    <property type="project" value="UniProtKB-UniRule"/>
</dbReference>
<dbReference type="GO" id="GO:0075526">
    <property type="term" value="P:cap snatching"/>
    <property type="evidence" value="ECO:0007669"/>
    <property type="project" value="UniProtKB-UniRule"/>
</dbReference>
<dbReference type="GO" id="GO:0039689">
    <property type="term" value="P:negative stranded viral RNA replication"/>
    <property type="evidence" value="ECO:0000250"/>
    <property type="project" value="UniProtKB"/>
</dbReference>
<dbReference type="GO" id="GO:0039696">
    <property type="term" value="P:RNA-templated viral transcription"/>
    <property type="evidence" value="ECO:0000250"/>
    <property type="project" value="UniProtKB"/>
</dbReference>
<dbReference type="FunFam" id="3.30.70.2640:FF:000001">
    <property type="entry name" value="RNA-directed RNA polymerase L"/>
    <property type="match status" value="1"/>
</dbReference>
<dbReference type="Gene3D" id="3.30.70.2640">
    <property type="entry name" value="Arenavirus RNA polymerase"/>
    <property type="match status" value="1"/>
</dbReference>
<dbReference type="Gene3D" id="1.20.1440.300">
    <property type="entry name" value="RNA-directed RNA polymerase L, helical domain"/>
    <property type="match status" value="1"/>
</dbReference>
<dbReference type="HAMAP" id="MF_04086">
    <property type="entry name" value="ARENA_L"/>
    <property type="match status" value="1"/>
</dbReference>
<dbReference type="InterPro" id="IPR026382">
    <property type="entry name" value="CapSnatch_arenavir"/>
</dbReference>
<dbReference type="InterPro" id="IPR048006">
    <property type="entry name" value="CapSnatch_bunyavir"/>
</dbReference>
<dbReference type="InterPro" id="IPR007099">
    <property type="entry name" value="RNA-dir_pol_NSvirus"/>
</dbReference>
<dbReference type="InterPro" id="IPR010453">
    <property type="entry name" value="RNA_pol_arenavir"/>
</dbReference>
<dbReference type="NCBIfam" id="TIGR04202">
    <property type="entry name" value="capSnatchArena"/>
    <property type="match status" value="1"/>
</dbReference>
<dbReference type="Pfam" id="PF06317">
    <property type="entry name" value="Arena_RNA_pol"/>
    <property type="match status" value="1"/>
</dbReference>
<dbReference type="Pfam" id="PF17296">
    <property type="entry name" value="ArenaCapSnatch"/>
    <property type="match status" value="1"/>
</dbReference>
<dbReference type="PIRSF" id="PIRSF000836">
    <property type="entry name" value="L_ArenaV"/>
    <property type="match status" value="1"/>
</dbReference>
<dbReference type="PROSITE" id="PS50525">
    <property type="entry name" value="RDRP_SSRNA_NEG_SEG"/>
    <property type="match status" value="1"/>
</dbReference>
<dbReference type="PROSITE" id="PS00501">
    <property type="entry name" value="SPASE_I_1"/>
    <property type="match status" value="1"/>
</dbReference>
<name>L_CHAVB</name>